<proteinExistence type="inferred from homology"/>
<accession>A1XFV8</accession>
<reference key="1">
    <citation type="journal article" date="2007" name="BMC Genomics">
        <title>Comparative chloroplast genomics: analyses including new sequences from the angiosperms Nuphar advena and Ranunculus macranthus.</title>
        <authorList>
            <person name="Raubeson L.A."/>
            <person name="Peery R."/>
            <person name="Chumley T.W."/>
            <person name="Dziubek C."/>
            <person name="Fourcade H.M."/>
            <person name="Boore J.L."/>
            <person name="Jansen R.K."/>
        </authorList>
    </citation>
    <scope>NUCLEOTIDE SEQUENCE [LARGE SCALE GENOMIC DNA]</scope>
</reference>
<dbReference type="EC" id="7.1.1.-" evidence="1"/>
<dbReference type="EMBL" id="DQ354691">
    <property type="protein sequence ID" value="ABC60461.1"/>
    <property type="molecule type" value="Genomic_DNA"/>
</dbReference>
<dbReference type="RefSeq" id="YP_001001537.1">
    <property type="nucleotide sequence ID" value="NC_008788.1"/>
</dbReference>
<dbReference type="SMR" id="A1XFV8"/>
<dbReference type="GeneID" id="4699561"/>
<dbReference type="GO" id="GO:0009535">
    <property type="term" value="C:chloroplast thylakoid membrane"/>
    <property type="evidence" value="ECO:0007669"/>
    <property type="project" value="UniProtKB-SubCell"/>
</dbReference>
<dbReference type="GO" id="GO:0008137">
    <property type="term" value="F:NADH dehydrogenase (ubiquinone) activity"/>
    <property type="evidence" value="ECO:0007669"/>
    <property type="project" value="InterPro"/>
</dbReference>
<dbReference type="GO" id="GO:0048038">
    <property type="term" value="F:quinone binding"/>
    <property type="evidence" value="ECO:0007669"/>
    <property type="project" value="UniProtKB-KW"/>
</dbReference>
<dbReference type="GO" id="GO:0019684">
    <property type="term" value="P:photosynthesis, light reaction"/>
    <property type="evidence" value="ECO:0007669"/>
    <property type="project" value="UniProtKB-UniRule"/>
</dbReference>
<dbReference type="FunFam" id="3.30.460.80:FF:000004">
    <property type="entry name" value="NAD(P)H-quinone oxidoreductase subunit J, chloroplastic"/>
    <property type="match status" value="1"/>
</dbReference>
<dbReference type="Gene3D" id="3.30.460.80">
    <property type="entry name" value="NADH:ubiquinone oxidoreductase, 30kDa subunit"/>
    <property type="match status" value="1"/>
</dbReference>
<dbReference type="HAMAP" id="MF_01357">
    <property type="entry name" value="NDH1_NuoC"/>
    <property type="match status" value="1"/>
</dbReference>
<dbReference type="InterPro" id="IPR010218">
    <property type="entry name" value="NADH_DH_suC"/>
</dbReference>
<dbReference type="InterPro" id="IPR037232">
    <property type="entry name" value="NADH_quin_OxRdtase_su_C/D-like"/>
</dbReference>
<dbReference type="InterPro" id="IPR001268">
    <property type="entry name" value="NADH_UbQ_OxRdtase_30kDa_su"/>
</dbReference>
<dbReference type="InterPro" id="IPR020396">
    <property type="entry name" value="NADH_UbQ_OxRdtase_CS"/>
</dbReference>
<dbReference type="NCBIfam" id="NF009141">
    <property type="entry name" value="PRK12494.1"/>
    <property type="match status" value="1"/>
</dbReference>
<dbReference type="PANTHER" id="PTHR10884:SF14">
    <property type="entry name" value="NADH DEHYDROGENASE [UBIQUINONE] IRON-SULFUR PROTEIN 3, MITOCHONDRIAL"/>
    <property type="match status" value="1"/>
</dbReference>
<dbReference type="PANTHER" id="PTHR10884">
    <property type="entry name" value="NADH DEHYDROGENASE UBIQUINONE IRON-SULFUR PROTEIN 3"/>
    <property type="match status" value="1"/>
</dbReference>
<dbReference type="Pfam" id="PF00329">
    <property type="entry name" value="Complex1_30kDa"/>
    <property type="match status" value="1"/>
</dbReference>
<dbReference type="SUPFAM" id="SSF143243">
    <property type="entry name" value="Nqo5-like"/>
    <property type="match status" value="1"/>
</dbReference>
<dbReference type="PROSITE" id="PS00542">
    <property type="entry name" value="COMPLEX1_30K"/>
    <property type="match status" value="1"/>
</dbReference>
<keyword id="KW-0150">Chloroplast</keyword>
<keyword id="KW-0472">Membrane</keyword>
<keyword id="KW-0520">NAD</keyword>
<keyword id="KW-0521">NADP</keyword>
<keyword id="KW-0934">Plastid</keyword>
<keyword id="KW-0618">Plastoquinone</keyword>
<keyword id="KW-0874">Quinone</keyword>
<keyword id="KW-0793">Thylakoid</keyword>
<keyword id="KW-1278">Translocase</keyword>
<keyword id="KW-0813">Transport</keyword>
<protein>
    <recommendedName>
        <fullName evidence="1">NAD(P)H-quinone oxidoreductase subunit J, chloroplastic</fullName>
        <ecNumber evidence="1">7.1.1.-</ecNumber>
    </recommendedName>
    <alternativeName>
        <fullName>NAD(P)H dehydrogenase subunit J</fullName>
    </alternativeName>
    <alternativeName>
        <fullName evidence="1">NADH-plastoquinone oxidoreductase subunit J</fullName>
    </alternativeName>
</protein>
<gene>
    <name evidence="1" type="primary">ndhJ</name>
</gene>
<organism>
    <name type="scientific">Nuphar advena</name>
    <name type="common">Common spatterdock</name>
    <name type="synonym">Nuphar lutea subsp. advena</name>
    <dbReference type="NCBI Taxonomy" id="77108"/>
    <lineage>
        <taxon>Eukaryota</taxon>
        <taxon>Viridiplantae</taxon>
        <taxon>Streptophyta</taxon>
        <taxon>Embryophyta</taxon>
        <taxon>Tracheophyta</taxon>
        <taxon>Spermatophyta</taxon>
        <taxon>Magnoliopsida</taxon>
        <taxon>Nymphaeales</taxon>
        <taxon>Nymphaeaceae</taxon>
        <taxon>Nuphar</taxon>
    </lineage>
</organism>
<evidence type="ECO:0000255" key="1">
    <source>
        <dbReference type="HAMAP-Rule" id="MF_01357"/>
    </source>
</evidence>
<sequence length="158" mass="18599">MQGRSSAWLVKHELVHRSLGFDYQGIETLQIKPEDWYSIAVISYVYGYNYLRSQCAYDVAPGGLLASVYHLTRIQYGVDQPEEVCIKVFVPRSNPRIPSVFWIWKSADFQERESYDMLGISYDNHPRMKRILMPESWVGWPLRKDYIAPNFYELQDAH</sequence>
<geneLocation type="chloroplast"/>
<name>NDHJ_NUPAD</name>
<feature type="chain" id="PRO_0000358287" description="NAD(P)H-quinone oxidoreductase subunit J, chloroplastic">
    <location>
        <begin position="1"/>
        <end position="158"/>
    </location>
</feature>
<comment type="function">
    <text evidence="1">NDH shuttles electrons from NAD(P)H:plastoquinone, via FMN and iron-sulfur (Fe-S) centers, to quinones in the photosynthetic chain and possibly in a chloroplast respiratory chain. The immediate electron acceptor for the enzyme in this species is believed to be plastoquinone. Couples the redox reaction to proton translocation, and thus conserves the redox energy in a proton gradient.</text>
</comment>
<comment type="catalytic activity">
    <reaction evidence="1">
        <text>a plastoquinone + NADH + (n+1) H(+)(in) = a plastoquinol + NAD(+) + n H(+)(out)</text>
        <dbReference type="Rhea" id="RHEA:42608"/>
        <dbReference type="Rhea" id="RHEA-COMP:9561"/>
        <dbReference type="Rhea" id="RHEA-COMP:9562"/>
        <dbReference type="ChEBI" id="CHEBI:15378"/>
        <dbReference type="ChEBI" id="CHEBI:17757"/>
        <dbReference type="ChEBI" id="CHEBI:57540"/>
        <dbReference type="ChEBI" id="CHEBI:57945"/>
        <dbReference type="ChEBI" id="CHEBI:62192"/>
    </reaction>
</comment>
<comment type="catalytic activity">
    <reaction evidence="1">
        <text>a plastoquinone + NADPH + (n+1) H(+)(in) = a plastoquinol + NADP(+) + n H(+)(out)</text>
        <dbReference type="Rhea" id="RHEA:42612"/>
        <dbReference type="Rhea" id="RHEA-COMP:9561"/>
        <dbReference type="Rhea" id="RHEA-COMP:9562"/>
        <dbReference type="ChEBI" id="CHEBI:15378"/>
        <dbReference type="ChEBI" id="CHEBI:17757"/>
        <dbReference type="ChEBI" id="CHEBI:57783"/>
        <dbReference type="ChEBI" id="CHEBI:58349"/>
        <dbReference type="ChEBI" id="CHEBI:62192"/>
    </reaction>
</comment>
<comment type="subunit">
    <text evidence="1">NDH is composed of at least 16 different subunits, 5 of which are encoded in the nucleus.</text>
</comment>
<comment type="subcellular location">
    <subcellularLocation>
        <location evidence="1">Plastid</location>
        <location evidence="1">Chloroplast thylakoid membrane</location>
        <topology evidence="1">Peripheral membrane protein</topology>
        <orientation evidence="1">Stromal side</orientation>
    </subcellularLocation>
</comment>
<comment type="similarity">
    <text evidence="1">Belongs to the complex I 30 kDa subunit family.</text>
</comment>